<name>RHAT_ECOBW</name>
<feature type="chain" id="PRO_1000215400" description="L-rhamnose-proton symporter">
    <location>
        <begin position="1"/>
        <end position="344"/>
    </location>
</feature>
<feature type="transmembrane region" description="Helical" evidence="1">
    <location>
        <begin position="4"/>
        <end position="24"/>
    </location>
</feature>
<feature type="transmembrane region" description="Helical" evidence="1">
    <location>
        <begin position="38"/>
        <end position="58"/>
    </location>
</feature>
<feature type="transmembrane region" description="Helical" evidence="1">
    <location>
        <begin position="74"/>
        <end position="94"/>
    </location>
</feature>
<feature type="transmembrane region" description="Helical" evidence="1">
    <location>
        <begin position="101"/>
        <end position="121"/>
    </location>
</feature>
<feature type="transmembrane region" description="Helical" evidence="1">
    <location>
        <begin position="137"/>
        <end position="157"/>
    </location>
</feature>
<feature type="transmembrane region" description="Helical" evidence="1">
    <location>
        <begin position="175"/>
        <end position="195"/>
    </location>
</feature>
<feature type="transmembrane region" description="Helical" evidence="1">
    <location>
        <begin position="214"/>
        <end position="234"/>
    </location>
</feature>
<feature type="transmembrane region" description="Helical" evidence="1">
    <location>
        <begin position="259"/>
        <end position="279"/>
    </location>
</feature>
<feature type="transmembrane region" description="Helical" evidence="1">
    <location>
        <begin position="290"/>
        <end position="310"/>
    </location>
</feature>
<feature type="transmembrane region" description="Helical" evidence="1">
    <location>
        <begin position="323"/>
        <end position="343"/>
    </location>
</feature>
<gene>
    <name evidence="1" type="primary">rhaT</name>
    <name type="ordered locus">BWG_3577</name>
</gene>
<organism>
    <name type="scientific">Escherichia coli (strain K12 / MC4100 / BW2952)</name>
    <dbReference type="NCBI Taxonomy" id="595496"/>
    <lineage>
        <taxon>Bacteria</taxon>
        <taxon>Pseudomonadati</taxon>
        <taxon>Pseudomonadota</taxon>
        <taxon>Gammaproteobacteria</taxon>
        <taxon>Enterobacterales</taxon>
        <taxon>Enterobacteriaceae</taxon>
        <taxon>Escherichia</taxon>
    </lineage>
</organism>
<protein>
    <recommendedName>
        <fullName evidence="1">L-rhamnose-proton symporter</fullName>
    </recommendedName>
    <alternativeName>
        <fullName evidence="1">L-rhamnose-H(+) transport protein</fullName>
    </alternativeName>
</protein>
<proteinExistence type="inferred from homology"/>
<accession>C5A075</accession>
<comment type="function">
    <text evidence="1">Uptake of L-rhamnose across the cytoplasmic membrane with the concomitant transport of protons into the cell (symport system).</text>
</comment>
<comment type="catalytic activity">
    <reaction evidence="1">
        <text>L-rhamnopyranose(in) + H(+)(in) = L-rhamnopyranose(out) + H(+)(out)</text>
        <dbReference type="Rhea" id="RHEA:29947"/>
        <dbReference type="ChEBI" id="CHEBI:15378"/>
        <dbReference type="ChEBI" id="CHEBI:62346"/>
    </reaction>
    <physiologicalReaction direction="right-to-left" evidence="1">
        <dbReference type="Rhea" id="RHEA:29949"/>
    </physiologicalReaction>
</comment>
<comment type="subcellular location">
    <subcellularLocation>
        <location evidence="1">Cell inner membrane</location>
        <topology evidence="1">Multi-pass membrane protein</topology>
    </subcellularLocation>
</comment>
<comment type="similarity">
    <text evidence="1">Belongs to the L-rhamnose transporter (TC 2.A.7.6) family.</text>
</comment>
<keyword id="KW-0997">Cell inner membrane</keyword>
<keyword id="KW-1003">Cell membrane</keyword>
<keyword id="KW-0472">Membrane</keyword>
<keyword id="KW-0762">Sugar transport</keyword>
<keyword id="KW-0769">Symport</keyword>
<keyword id="KW-0812">Transmembrane</keyword>
<keyword id="KW-1133">Transmembrane helix</keyword>
<keyword id="KW-0813">Transport</keyword>
<reference key="1">
    <citation type="journal article" date="2009" name="J. Bacteriol.">
        <title>Genomic sequencing reveals regulatory mutations and recombinational events in the widely used MC4100 lineage of Escherichia coli K-12.</title>
        <authorList>
            <person name="Ferenci T."/>
            <person name="Zhou Z."/>
            <person name="Betteridge T."/>
            <person name="Ren Y."/>
            <person name="Liu Y."/>
            <person name="Feng L."/>
            <person name="Reeves P.R."/>
            <person name="Wang L."/>
        </authorList>
    </citation>
    <scope>NUCLEOTIDE SEQUENCE [LARGE SCALE GENOMIC DNA]</scope>
    <source>
        <strain>K12 / MC4100 / BW2952</strain>
    </source>
</reference>
<sequence>MSNAITMGIFWHLIGAASAACFYAPFKKVKKWSWETMWSVGGIVSWIILPWAISALLLPNFWAYYSSFSLSTRLPVFLFGAMWGIGNINYGLTMRYLGMSMGIGIAIGITLIVGTLMTPIINGNFDVLISTEGGRMTLLGVLVALIGVGIVTRAGQLKERKMGIKAEEFNLKKGLVLAVMCGIFSAGMSFAMNAAKPMHEAAAALGVDPLYVALPSYVVIMGGGAIINLGFCFIRLAKVKDLSLKADFSLAKSLIIHNVLLSTLGGLMWYLQFFFYAWGHARIPAQYDYISWMLHMSFYVLCGGIVGLVLKEWNNAGRRPVTVLSLGCVVIIVAANIVGIGMAN</sequence>
<evidence type="ECO:0000255" key="1">
    <source>
        <dbReference type="HAMAP-Rule" id="MF_01532"/>
    </source>
</evidence>
<dbReference type="EMBL" id="CP001396">
    <property type="protein sequence ID" value="ACR63675.1"/>
    <property type="molecule type" value="Genomic_DNA"/>
</dbReference>
<dbReference type="RefSeq" id="WP_000063526.1">
    <property type="nucleotide sequence ID" value="NC_012759.1"/>
</dbReference>
<dbReference type="KEGG" id="ebw:BWG_3577"/>
<dbReference type="HOGENOM" id="CLU_066437_0_0_6"/>
<dbReference type="GO" id="GO:0005886">
    <property type="term" value="C:plasma membrane"/>
    <property type="evidence" value="ECO:0007669"/>
    <property type="project" value="UniProtKB-SubCell"/>
</dbReference>
<dbReference type="GO" id="GO:0015153">
    <property type="term" value="F:rhamnose transmembrane transporter activity"/>
    <property type="evidence" value="ECO:0007669"/>
    <property type="project" value="UniProtKB-UniRule"/>
</dbReference>
<dbReference type="GO" id="GO:0015293">
    <property type="term" value="F:symporter activity"/>
    <property type="evidence" value="ECO:0007669"/>
    <property type="project" value="UniProtKB-KW"/>
</dbReference>
<dbReference type="HAMAP" id="MF_01532">
    <property type="entry name" value="RhaT"/>
    <property type="match status" value="1"/>
</dbReference>
<dbReference type="InterPro" id="IPR004673">
    <property type="entry name" value="L-rhamnose-proton_sym_RhaT"/>
</dbReference>
<dbReference type="NCBIfam" id="NF010021">
    <property type="entry name" value="PRK13499.1-1"/>
    <property type="match status" value="1"/>
</dbReference>
<dbReference type="NCBIfam" id="NF010023">
    <property type="entry name" value="PRK13499.1-3"/>
    <property type="match status" value="1"/>
</dbReference>
<dbReference type="NCBIfam" id="TIGR00776">
    <property type="entry name" value="RhaT"/>
    <property type="match status" value="1"/>
</dbReference>
<dbReference type="Pfam" id="PF06379">
    <property type="entry name" value="RhaT"/>
    <property type="match status" value="1"/>
</dbReference>